<evidence type="ECO:0000255" key="1">
    <source>
        <dbReference type="HAMAP-Rule" id="MF_01026"/>
    </source>
</evidence>
<keyword id="KW-0004">4Fe-4S</keyword>
<keyword id="KW-0028">Amino-acid biosynthesis</keyword>
<keyword id="KW-0100">Branched-chain amino acid biosynthesis</keyword>
<keyword id="KW-0408">Iron</keyword>
<keyword id="KW-0411">Iron-sulfur</keyword>
<keyword id="KW-0432">Leucine biosynthesis</keyword>
<keyword id="KW-0456">Lyase</keyword>
<keyword id="KW-0479">Metal-binding</keyword>
<feature type="chain" id="PRO_1000063573" description="3-isopropylmalate dehydratase large subunit">
    <location>
        <begin position="1"/>
        <end position="473"/>
    </location>
</feature>
<feature type="binding site" evidence="1">
    <location>
        <position position="354"/>
    </location>
    <ligand>
        <name>[4Fe-4S] cluster</name>
        <dbReference type="ChEBI" id="CHEBI:49883"/>
    </ligand>
</feature>
<feature type="binding site" evidence="1">
    <location>
        <position position="414"/>
    </location>
    <ligand>
        <name>[4Fe-4S] cluster</name>
        <dbReference type="ChEBI" id="CHEBI:49883"/>
    </ligand>
</feature>
<feature type="binding site" evidence="1">
    <location>
        <position position="417"/>
    </location>
    <ligand>
        <name>[4Fe-4S] cluster</name>
        <dbReference type="ChEBI" id="CHEBI:49883"/>
    </ligand>
</feature>
<reference key="1">
    <citation type="journal article" date="2007" name="Proc. Natl. Acad. Sci. U.S.A.">
        <title>Genome plasticity of BCG and impact on vaccine efficacy.</title>
        <authorList>
            <person name="Brosch R."/>
            <person name="Gordon S.V."/>
            <person name="Garnier T."/>
            <person name="Eiglmeier K."/>
            <person name="Frigui W."/>
            <person name="Valenti P."/>
            <person name="Dos Santos S."/>
            <person name="Duthoy S."/>
            <person name="Lacroix C."/>
            <person name="Garcia-Pelayo C."/>
            <person name="Inwald J.K."/>
            <person name="Golby P."/>
            <person name="Garcia J.N."/>
            <person name="Hewinson R.G."/>
            <person name="Behr M.A."/>
            <person name="Quail M.A."/>
            <person name="Churcher C."/>
            <person name="Barrell B.G."/>
            <person name="Parkhill J."/>
            <person name="Cole S.T."/>
        </authorList>
    </citation>
    <scope>NUCLEOTIDE SEQUENCE [LARGE SCALE GENOMIC DNA]</scope>
    <source>
        <strain>BCG / Pasteur 1173P2</strain>
    </source>
</reference>
<proteinExistence type="inferred from homology"/>
<accession>A1KMY2</accession>
<dbReference type="EC" id="4.2.1.33" evidence="1"/>
<dbReference type="EMBL" id="AM408590">
    <property type="protein sequence ID" value="CAL72998.1"/>
    <property type="molecule type" value="Genomic_DNA"/>
</dbReference>
<dbReference type="RefSeq" id="WP_003415114.1">
    <property type="nucleotide sequence ID" value="NC_008769.1"/>
</dbReference>
<dbReference type="SMR" id="A1KMY2"/>
<dbReference type="KEGG" id="mbb:BCG_3009c"/>
<dbReference type="HOGENOM" id="CLU_006714_3_4_11"/>
<dbReference type="UniPathway" id="UPA00048">
    <property type="reaction ID" value="UER00071"/>
</dbReference>
<dbReference type="Proteomes" id="UP000001472">
    <property type="component" value="Chromosome"/>
</dbReference>
<dbReference type="GO" id="GO:0003861">
    <property type="term" value="F:3-isopropylmalate dehydratase activity"/>
    <property type="evidence" value="ECO:0007669"/>
    <property type="project" value="UniProtKB-UniRule"/>
</dbReference>
<dbReference type="GO" id="GO:0051539">
    <property type="term" value="F:4 iron, 4 sulfur cluster binding"/>
    <property type="evidence" value="ECO:0007669"/>
    <property type="project" value="UniProtKB-KW"/>
</dbReference>
<dbReference type="GO" id="GO:0046872">
    <property type="term" value="F:metal ion binding"/>
    <property type="evidence" value="ECO:0007669"/>
    <property type="project" value="UniProtKB-KW"/>
</dbReference>
<dbReference type="GO" id="GO:0009098">
    <property type="term" value="P:L-leucine biosynthetic process"/>
    <property type="evidence" value="ECO:0007669"/>
    <property type="project" value="UniProtKB-UniRule"/>
</dbReference>
<dbReference type="CDD" id="cd01583">
    <property type="entry name" value="IPMI"/>
    <property type="match status" value="1"/>
</dbReference>
<dbReference type="FunFam" id="3.30.499.10:FF:000006">
    <property type="entry name" value="3-isopropylmalate dehydratase large subunit"/>
    <property type="match status" value="1"/>
</dbReference>
<dbReference type="FunFam" id="3.30.499.10:FF:000007">
    <property type="entry name" value="3-isopropylmalate dehydratase large subunit"/>
    <property type="match status" value="1"/>
</dbReference>
<dbReference type="Gene3D" id="3.30.499.10">
    <property type="entry name" value="Aconitase, domain 3"/>
    <property type="match status" value="2"/>
</dbReference>
<dbReference type="HAMAP" id="MF_01026">
    <property type="entry name" value="LeuC_type1"/>
    <property type="match status" value="1"/>
</dbReference>
<dbReference type="InterPro" id="IPR004430">
    <property type="entry name" value="3-IsopropMal_deHydase_lsu"/>
</dbReference>
<dbReference type="InterPro" id="IPR015931">
    <property type="entry name" value="Acnase/IPM_dHydase_lsu_aba_1/3"/>
</dbReference>
<dbReference type="InterPro" id="IPR001030">
    <property type="entry name" value="Acoase/IPM_deHydtase_lsu_aba"/>
</dbReference>
<dbReference type="InterPro" id="IPR018136">
    <property type="entry name" value="Aconitase_4Fe-4S_BS"/>
</dbReference>
<dbReference type="InterPro" id="IPR036008">
    <property type="entry name" value="Aconitase_4Fe-4S_dom"/>
</dbReference>
<dbReference type="InterPro" id="IPR050067">
    <property type="entry name" value="IPM_dehydratase_rel_enz"/>
</dbReference>
<dbReference type="InterPro" id="IPR033941">
    <property type="entry name" value="IPMI_cat"/>
</dbReference>
<dbReference type="NCBIfam" id="TIGR00170">
    <property type="entry name" value="leuC"/>
    <property type="match status" value="1"/>
</dbReference>
<dbReference type="NCBIfam" id="NF004016">
    <property type="entry name" value="PRK05478.1"/>
    <property type="match status" value="1"/>
</dbReference>
<dbReference type="NCBIfam" id="NF009116">
    <property type="entry name" value="PRK12466.1"/>
    <property type="match status" value="1"/>
</dbReference>
<dbReference type="PANTHER" id="PTHR43822:SF9">
    <property type="entry name" value="3-ISOPROPYLMALATE DEHYDRATASE"/>
    <property type="match status" value="1"/>
</dbReference>
<dbReference type="PANTHER" id="PTHR43822">
    <property type="entry name" value="HOMOACONITASE, MITOCHONDRIAL-RELATED"/>
    <property type="match status" value="1"/>
</dbReference>
<dbReference type="Pfam" id="PF00330">
    <property type="entry name" value="Aconitase"/>
    <property type="match status" value="1"/>
</dbReference>
<dbReference type="PRINTS" id="PR00415">
    <property type="entry name" value="ACONITASE"/>
</dbReference>
<dbReference type="SUPFAM" id="SSF53732">
    <property type="entry name" value="Aconitase iron-sulfur domain"/>
    <property type="match status" value="1"/>
</dbReference>
<dbReference type="PROSITE" id="PS00450">
    <property type="entry name" value="ACONITASE_1"/>
    <property type="match status" value="1"/>
</dbReference>
<dbReference type="PROSITE" id="PS01244">
    <property type="entry name" value="ACONITASE_2"/>
    <property type="match status" value="1"/>
</dbReference>
<name>LEUC_MYCBP</name>
<comment type="function">
    <text evidence="1">Catalyzes the isomerization between 2-isopropylmalate and 3-isopropylmalate, via the formation of 2-isopropylmaleate.</text>
</comment>
<comment type="catalytic activity">
    <reaction evidence="1">
        <text>(2R,3S)-3-isopropylmalate = (2S)-2-isopropylmalate</text>
        <dbReference type="Rhea" id="RHEA:32287"/>
        <dbReference type="ChEBI" id="CHEBI:1178"/>
        <dbReference type="ChEBI" id="CHEBI:35121"/>
        <dbReference type="EC" id="4.2.1.33"/>
    </reaction>
</comment>
<comment type="cofactor">
    <cofactor evidence="1">
        <name>[4Fe-4S] cluster</name>
        <dbReference type="ChEBI" id="CHEBI:49883"/>
    </cofactor>
    <text evidence="1">Binds 1 [4Fe-4S] cluster per subunit.</text>
</comment>
<comment type="pathway">
    <text evidence="1">Amino-acid biosynthesis; L-leucine biosynthesis; L-leucine from 3-methyl-2-oxobutanoate: step 2/4.</text>
</comment>
<comment type="subunit">
    <text evidence="1">Heterodimer of LeuC and LeuD.</text>
</comment>
<comment type="similarity">
    <text evidence="1">Belongs to the aconitase/IPM isomerase family. LeuC type 1 subfamily.</text>
</comment>
<protein>
    <recommendedName>
        <fullName evidence="1">3-isopropylmalate dehydratase large subunit</fullName>
        <ecNumber evidence="1">4.2.1.33</ecNumber>
    </recommendedName>
    <alternativeName>
        <fullName evidence="1">Alpha-IPM isomerase</fullName>
        <shortName evidence="1">IPMI</shortName>
    </alternativeName>
    <alternativeName>
        <fullName evidence="1">Isopropylmalate isomerase</fullName>
    </alternativeName>
</protein>
<organism>
    <name type="scientific">Mycobacterium bovis (strain BCG / Pasteur 1173P2)</name>
    <dbReference type="NCBI Taxonomy" id="410289"/>
    <lineage>
        <taxon>Bacteria</taxon>
        <taxon>Bacillati</taxon>
        <taxon>Actinomycetota</taxon>
        <taxon>Actinomycetes</taxon>
        <taxon>Mycobacteriales</taxon>
        <taxon>Mycobacteriaceae</taxon>
        <taxon>Mycobacterium</taxon>
        <taxon>Mycobacterium tuberculosis complex</taxon>
    </lineage>
</organism>
<gene>
    <name evidence="1" type="primary">leuC</name>
    <name type="ordered locus">BCG_3009c</name>
</gene>
<sequence>MALQTGEPRTLAEKIWDDHIVVSGGGCAPDLIYIDLHLVHEVTSPQAFDGLRLAGRRVRRPELTLATEDHNVPTVDIDQPIADPVSRTQVETLRRNCAEFGIRLHSMGDIEQGIVHVVGPQLGLTQPGMTIVCGDSHTSTHGAFGALAMGIGTSEVEHVLATQTLPLRPFKTMAVNVDGRLPDGVSAKDIILALIAKIGTGGGQGHVIEYRGSAIESLSMEGRMTICNMSIEAGARAGMVAPDETTYAFLRGRPHAPTGAQWDTALVYWQRLRTDVGAVFDTEVYLDAASLSPFVTWGTNPGQGVPLAAAVPDPQLMTDDAERQAAEKALAYMDLRPGTAMREIAVDAVFVGSCTNGRIEDLRVVAEVLRGRKVADGVRMLIVPGSMRVRAQAEAEGLGEIFTDAGAQWRQAGCSMCLGMNPDQLASGERCAATSNRNFEGRQGAGGRTHLVSPAVAAATAVRGTLSSPADLN</sequence>